<name>PER1_SOLLC</name>
<reference key="1">
    <citation type="journal article" date="1989" name="Mol. Gen. Genet.">
        <title>Molecular cloning, nucleotide sequence, and abscisic acid induction of a suberization-associated highly anionic peroxidase.</title>
        <authorList>
            <person name="Roberts E."/>
            <person name="Kolattukudy P.E."/>
        </authorList>
    </citation>
    <scope>NUCLEOTIDE SEQUENCE [GENOMIC DNA]</scope>
    <source>
        <strain>cv. Castlemart II</strain>
    </source>
</reference>
<sequence length="364" mass="38750">MGFRLSHLSLALSFVALALAGVAIYRNTYEAIIMKNGSLLKNVSPDFDSLESGVASILTLNNNKKRNSDKYLRQQLTPEACVFSAVRAVVDSAIDAETRMGASLIRLHFHDCFVDGCDGGILLDDINGTFTGEQNSPPNANSARGYEVIAQAKQSVINTCPNVSVSCADILAIAARDSVAKLGGQTYSVALGRSDARTANFSGAINQLPAPFDNLTVQIQKFSDKNFTLREMVALAGAHTVGFARCSTVCTSGNVNPAAQLQCNCSATLTDSDLQQLDTTPTMFDKVYYDNLNSNQGIMFSDQVLTGDATTAGFVTDYSNDVNVFLGDFAAAMIKMGDLPPSAGAQLEIRDVCSRVNPTSVASM</sequence>
<proteinExistence type="inferred from homology"/>
<feature type="signal peptide" evidence="1">
    <location>
        <begin position="1"/>
        <end position="25"/>
    </location>
</feature>
<feature type="chain" id="PRO_0000023758" description="Suberization-associated anionic peroxidase 1">
    <location>
        <begin position="26"/>
        <end position="364"/>
    </location>
</feature>
<feature type="active site" description="Proton acceptor" evidence="2 3">
    <location>
        <position position="110"/>
    </location>
</feature>
<feature type="binding site" evidence="2">
    <location>
        <position position="111"/>
    </location>
    <ligand>
        <name>Ca(2+)</name>
        <dbReference type="ChEBI" id="CHEBI:29108"/>
        <label>1</label>
    </ligand>
</feature>
<feature type="binding site" evidence="2">
    <location>
        <position position="114"/>
    </location>
    <ligand>
        <name>Ca(2+)</name>
        <dbReference type="ChEBI" id="CHEBI:29108"/>
        <label>1</label>
    </ligand>
</feature>
<feature type="binding site" evidence="2">
    <location>
        <position position="116"/>
    </location>
    <ligand>
        <name>Ca(2+)</name>
        <dbReference type="ChEBI" id="CHEBI:29108"/>
        <label>1</label>
    </ligand>
</feature>
<feature type="binding site" evidence="2">
    <location>
        <position position="118"/>
    </location>
    <ligand>
        <name>Ca(2+)</name>
        <dbReference type="ChEBI" id="CHEBI:29108"/>
        <label>1</label>
    </ligand>
</feature>
<feature type="binding site" evidence="2">
    <location>
        <position position="209"/>
    </location>
    <ligand>
        <name>substrate</name>
    </ligand>
</feature>
<feature type="binding site" description="axial binding residue" evidence="2">
    <location>
        <position position="239"/>
    </location>
    <ligand>
        <name>heme b</name>
        <dbReference type="ChEBI" id="CHEBI:60344"/>
    </ligand>
    <ligandPart>
        <name>Fe</name>
        <dbReference type="ChEBI" id="CHEBI:18248"/>
    </ligandPart>
</feature>
<feature type="binding site" evidence="2">
    <location>
        <position position="240"/>
    </location>
    <ligand>
        <name>Ca(2+)</name>
        <dbReference type="ChEBI" id="CHEBI:29108"/>
        <label>2</label>
    </ligand>
</feature>
<feature type="binding site" evidence="2">
    <location>
        <position position="278"/>
    </location>
    <ligand>
        <name>Ca(2+)</name>
        <dbReference type="ChEBI" id="CHEBI:29108"/>
        <label>2</label>
    </ligand>
</feature>
<feature type="binding site" evidence="2">
    <location>
        <position position="280"/>
    </location>
    <ligand>
        <name>Ca(2+)</name>
        <dbReference type="ChEBI" id="CHEBI:29108"/>
        <label>2</label>
    </ligand>
</feature>
<feature type="binding site" evidence="2">
    <location>
        <position position="285"/>
    </location>
    <ligand>
        <name>Ca(2+)</name>
        <dbReference type="ChEBI" id="CHEBI:29108"/>
        <label>2</label>
    </ligand>
</feature>
<feature type="site" description="Transition state stabilizer" evidence="2">
    <location>
        <position position="106"/>
    </location>
</feature>
<feature type="glycosylation site" description="N-linked (GlcNAc...) asparagine" evidence="1">
    <location>
        <position position="36"/>
    </location>
</feature>
<feature type="glycosylation site" description="N-linked (GlcNAc...) asparagine" evidence="1">
    <location>
        <position position="127"/>
    </location>
</feature>
<feature type="glycosylation site" description="N-linked (GlcNAc...) asparagine" evidence="1">
    <location>
        <position position="162"/>
    </location>
</feature>
<feature type="glycosylation site" description="N-linked (GlcNAc...) asparagine" evidence="1">
    <location>
        <position position="200"/>
    </location>
</feature>
<feature type="glycosylation site" description="N-linked (GlcNAc...) asparagine" evidence="1">
    <location>
        <position position="214"/>
    </location>
</feature>
<feature type="glycosylation site" description="N-linked (GlcNAc...) asparagine" evidence="1">
    <location>
        <position position="226"/>
    </location>
</feature>
<feature type="glycosylation site" description="N-linked (GlcNAc...) asparagine" evidence="1">
    <location>
        <position position="264"/>
    </location>
</feature>
<feature type="disulfide bond" evidence="2">
    <location>
        <begin position="81"/>
        <end position="160"/>
    </location>
</feature>
<feature type="disulfide bond" evidence="2">
    <location>
        <begin position="112"/>
        <end position="117"/>
    </location>
</feature>
<feature type="disulfide bond" evidence="2">
    <location>
        <begin position="167"/>
        <end position="353"/>
    </location>
</feature>
<feature type="disulfide bond" evidence="2">
    <location>
        <begin position="246"/>
        <end position="265"/>
    </location>
</feature>
<gene>
    <name type="primary">TAP1</name>
</gene>
<dbReference type="EC" id="1.11.1.7"/>
<dbReference type="EMBL" id="X15853">
    <property type="protein sequence ID" value="CAA33852.1"/>
    <property type="molecule type" value="Genomic_DNA"/>
</dbReference>
<dbReference type="PIR" id="S04763">
    <property type="entry name" value="S04763"/>
</dbReference>
<dbReference type="RefSeq" id="NP_001296245.1">
    <property type="nucleotide sequence ID" value="NM_001309316.1"/>
</dbReference>
<dbReference type="SMR" id="P15003"/>
<dbReference type="STRING" id="4081.P15003"/>
<dbReference type="Allergome" id="1094">
    <property type="allergen name" value="Sola l Peroxidase"/>
</dbReference>
<dbReference type="PeroxiBase" id="8">
    <property type="entry name" value="LePrx76"/>
</dbReference>
<dbReference type="GlyCosmos" id="P15003">
    <property type="glycosylation" value="7 sites, No reported glycans"/>
</dbReference>
<dbReference type="PaxDb" id="4081-Solyc02g079500.2.1"/>
<dbReference type="ProMEX" id="P15003"/>
<dbReference type="GeneID" id="101245815"/>
<dbReference type="KEGG" id="sly:101245815"/>
<dbReference type="eggNOG" id="ENOG502QU1K">
    <property type="taxonomic scope" value="Eukaryota"/>
</dbReference>
<dbReference type="HOGENOM" id="CLU_010543_0_0_1"/>
<dbReference type="InParanoid" id="P15003"/>
<dbReference type="OrthoDB" id="2113341at2759"/>
<dbReference type="PhylomeDB" id="P15003"/>
<dbReference type="Proteomes" id="UP000004994">
    <property type="component" value="Unplaced"/>
</dbReference>
<dbReference type="ExpressionAtlas" id="P15003">
    <property type="expression patterns" value="baseline and differential"/>
</dbReference>
<dbReference type="GO" id="GO:0005576">
    <property type="term" value="C:extracellular region"/>
    <property type="evidence" value="ECO:0007669"/>
    <property type="project" value="UniProtKB-SubCell"/>
</dbReference>
<dbReference type="GO" id="GO:0020037">
    <property type="term" value="F:heme binding"/>
    <property type="evidence" value="ECO:0007669"/>
    <property type="project" value="InterPro"/>
</dbReference>
<dbReference type="GO" id="GO:0140825">
    <property type="term" value="F:lactoperoxidase activity"/>
    <property type="evidence" value="ECO:0007669"/>
    <property type="project" value="UniProtKB-EC"/>
</dbReference>
<dbReference type="GO" id="GO:0046872">
    <property type="term" value="F:metal ion binding"/>
    <property type="evidence" value="ECO:0007669"/>
    <property type="project" value="UniProtKB-KW"/>
</dbReference>
<dbReference type="GO" id="GO:0042744">
    <property type="term" value="P:hydrogen peroxide catabolic process"/>
    <property type="evidence" value="ECO:0007669"/>
    <property type="project" value="UniProtKB-KW"/>
</dbReference>
<dbReference type="GO" id="GO:0006979">
    <property type="term" value="P:response to oxidative stress"/>
    <property type="evidence" value="ECO:0007669"/>
    <property type="project" value="InterPro"/>
</dbReference>
<dbReference type="CDD" id="cd00693">
    <property type="entry name" value="secretory_peroxidase"/>
    <property type="match status" value="1"/>
</dbReference>
<dbReference type="FunFam" id="1.10.420.10:FF:000001">
    <property type="entry name" value="Peroxidase"/>
    <property type="match status" value="1"/>
</dbReference>
<dbReference type="Gene3D" id="1.10.520.10">
    <property type="match status" value="1"/>
</dbReference>
<dbReference type="Gene3D" id="1.10.420.10">
    <property type="entry name" value="Peroxidase, domain 2"/>
    <property type="match status" value="1"/>
</dbReference>
<dbReference type="InterPro" id="IPR002016">
    <property type="entry name" value="Haem_peroxidase"/>
</dbReference>
<dbReference type="InterPro" id="IPR010255">
    <property type="entry name" value="Haem_peroxidase_sf"/>
</dbReference>
<dbReference type="InterPro" id="IPR000823">
    <property type="entry name" value="Peroxidase_pln"/>
</dbReference>
<dbReference type="InterPro" id="IPR019794">
    <property type="entry name" value="Peroxidases_AS"/>
</dbReference>
<dbReference type="InterPro" id="IPR019793">
    <property type="entry name" value="Peroxidases_heam-ligand_BS"/>
</dbReference>
<dbReference type="InterPro" id="IPR033905">
    <property type="entry name" value="Secretory_peroxidase"/>
</dbReference>
<dbReference type="PANTHER" id="PTHR31388:SF264">
    <property type="entry name" value="PEROXIDASE 59"/>
    <property type="match status" value="1"/>
</dbReference>
<dbReference type="PANTHER" id="PTHR31388">
    <property type="entry name" value="PEROXIDASE 72-RELATED"/>
    <property type="match status" value="1"/>
</dbReference>
<dbReference type="Pfam" id="PF00141">
    <property type="entry name" value="peroxidase"/>
    <property type="match status" value="1"/>
</dbReference>
<dbReference type="PRINTS" id="PR00458">
    <property type="entry name" value="PEROXIDASE"/>
</dbReference>
<dbReference type="PRINTS" id="PR00461">
    <property type="entry name" value="PLPEROXIDASE"/>
</dbReference>
<dbReference type="SUPFAM" id="SSF48113">
    <property type="entry name" value="Heme-dependent peroxidases"/>
    <property type="match status" value="1"/>
</dbReference>
<dbReference type="PROSITE" id="PS00435">
    <property type="entry name" value="PEROXIDASE_1"/>
    <property type="match status" value="1"/>
</dbReference>
<dbReference type="PROSITE" id="PS00436">
    <property type="entry name" value="PEROXIDASE_2"/>
    <property type="match status" value="1"/>
</dbReference>
<dbReference type="PROSITE" id="PS50873">
    <property type="entry name" value="PEROXIDASE_4"/>
    <property type="match status" value="1"/>
</dbReference>
<keyword id="KW-0106">Calcium</keyword>
<keyword id="KW-1015">Disulfide bond</keyword>
<keyword id="KW-0325">Glycoprotein</keyword>
<keyword id="KW-0349">Heme</keyword>
<keyword id="KW-0376">Hydrogen peroxide</keyword>
<keyword id="KW-0408">Iron</keyword>
<keyword id="KW-0479">Metal-binding</keyword>
<keyword id="KW-0560">Oxidoreductase</keyword>
<keyword id="KW-0575">Peroxidase</keyword>
<keyword id="KW-1185">Reference proteome</keyword>
<keyword id="KW-0964">Secreted</keyword>
<keyword id="KW-0732">Signal</keyword>
<evidence type="ECO:0000255" key="1"/>
<evidence type="ECO:0000255" key="2">
    <source>
        <dbReference type="PROSITE-ProRule" id="PRU00297"/>
    </source>
</evidence>
<evidence type="ECO:0000255" key="3">
    <source>
        <dbReference type="PROSITE-ProRule" id="PRU10012"/>
    </source>
</evidence>
<accession>P15003</accession>
<comment type="function">
    <text>Removal of H(2)O(2), oxidation of toxic reductants, biosynthesis and degradation of lignin, suberization, auxin catabolism, response to environmental stresses such as wounding, pathogen attack and oxidative stress. These functions might be dependent on each isozyme/isoform in each plant tissue.</text>
</comment>
<comment type="function">
    <text>Suggested to catalyze the deposition of the aromatic residues of suberin on the cell wall and thus play a role in cell-suberization.</text>
</comment>
<comment type="catalytic activity">
    <reaction>
        <text>2 a phenolic donor + H2O2 = 2 a phenolic radical donor + 2 H2O</text>
        <dbReference type="Rhea" id="RHEA:56136"/>
        <dbReference type="ChEBI" id="CHEBI:15377"/>
        <dbReference type="ChEBI" id="CHEBI:16240"/>
        <dbReference type="ChEBI" id="CHEBI:139520"/>
        <dbReference type="ChEBI" id="CHEBI:139521"/>
        <dbReference type="EC" id="1.11.1.7"/>
    </reaction>
</comment>
<comment type="cofactor">
    <cofactor>
        <name>Ca(2+)</name>
        <dbReference type="ChEBI" id="CHEBI:29108"/>
    </cofactor>
    <text>Binds 2 calcium ions per subunit.</text>
</comment>
<comment type="cofactor">
    <cofactor>
        <name>heme b</name>
        <dbReference type="ChEBI" id="CHEBI:60344"/>
    </cofactor>
    <text>Binds 1 heme b (iron(II)-protoporphyrin IX) group per subunit.</text>
</comment>
<comment type="subcellular location">
    <subcellularLocation>
        <location evidence="2">Secreted</location>
    </subcellularLocation>
</comment>
<comment type="similarity">
    <text evidence="2">Belongs to the peroxidase family. Classical plant (class III) peroxidase subfamily.</text>
</comment>
<protein>
    <recommendedName>
        <fullName>Suberization-associated anionic peroxidase 1</fullName>
        <ecNumber>1.11.1.7</ecNumber>
    </recommendedName>
    <alternativeName>
        <fullName>TMP1</fullName>
    </alternativeName>
</protein>
<organism>
    <name type="scientific">Solanum lycopersicum</name>
    <name type="common">Tomato</name>
    <name type="synonym">Lycopersicon esculentum</name>
    <dbReference type="NCBI Taxonomy" id="4081"/>
    <lineage>
        <taxon>Eukaryota</taxon>
        <taxon>Viridiplantae</taxon>
        <taxon>Streptophyta</taxon>
        <taxon>Embryophyta</taxon>
        <taxon>Tracheophyta</taxon>
        <taxon>Spermatophyta</taxon>
        <taxon>Magnoliopsida</taxon>
        <taxon>eudicotyledons</taxon>
        <taxon>Gunneridae</taxon>
        <taxon>Pentapetalae</taxon>
        <taxon>asterids</taxon>
        <taxon>lamiids</taxon>
        <taxon>Solanales</taxon>
        <taxon>Solanaceae</taxon>
        <taxon>Solanoideae</taxon>
        <taxon>Solaneae</taxon>
        <taxon>Solanum</taxon>
        <taxon>Solanum subgen. Lycopersicon</taxon>
    </lineage>
</organism>